<dbReference type="EC" id="1.3.3.8" evidence="6"/>
<dbReference type="EMBL" id="HQ116698">
    <property type="protein sequence ID" value="ADY15027.1"/>
    <property type="molecule type" value="mRNA"/>
</dbReference>
<dbReference type="SMR" id="F1BVB7"/>
<dbReference type="GO" id="GO:0071949">
    <property type="term" value="F:FAD binding"/>
    <property type="evidence" value="ECO:0000314"/>
    <property type="project" value="UniProtKB"/>
</dbReference>
<dbReference type="GO" id="GO:0050328">
    <property type="term" value="F:tetrahydroberberine oxidase activity"/>
    <property type="evidence" value="ECO:0000314"/>
    <property type="project" value="UniProtKB"/>
</dbReference>
<dbReference type="Gene3D" id="3.30.465.10">
    <property type="match status" value="1"/>
</dbReference>
<dbReference type="Gene3D" id="3.40.462.20">
    <property type="match status" value="1"/>
</dbReference>
<dbReference type="Gene3D" id="3.30.43.10">
    <property type="entry name" value="Uridine Diphospho-n-acetylenolpyruvylglucosamine Reductase, domain 2"/>
    <property type="match status" value="1"/>
</dbReference>
<dbReference type="InterPro" id="IPR012951">
    <property type="entry name" value="BBE"/>
</dbReference>
<dbReference type="InterPro" id="IPR016166">
    <property type="entry name" value="FAD-bd_PCMH"/>
</dbReference>
<dbReference type="InterPro" id="IPR036318">
    <property type="entry name" value="FAD-bd_PCMH-like_sf"/>
</dbReference>
<dbReference type="InterPro" id="IPR016167">
    <property type="entry name" value="FAD-bd_PCMH_sub1"/>
</dbReference>
<dbReference type="InterPro" id="IPR016169">
    <property type="entry name" value="FAD-bd_PCMH_sub2"/>
</dbReference>
<dbReference type="InterPro" id="IPR006094">
    <property type="entry name" value="Oxid_FAD_bind_N"/>
</dbReference>
<dbReference type="PANTHER" id="PTHR32448">
    <property type="entry name" value="OS08G0158400 PROTEIN"/>
    <property type="match status" value="1"/>
</dbReference>
<dbReference type="Pfam" id="PF08031">
    <property type="entry name" value="BBE"/>
    <property type="match status" value="1"/>
</dbReference>
<dbReference type="Pfam" id="PF01565">
    <property type="entry name" value="FAD_binding_4"/>
    <property type="match status" value="1"/>
</dbReference>
<dbReference type="SUPFAM" id="SSF56176">
    <property type="entry name" value="FAD-binding/transporter-associated domain-like"/>
    <property type="match status" value="1"/>
</dbReference>
<dbReference type="PROSITE" id="PS51387">
    <property type="entry name" value="FAD_PCMH"/>
    <property type="match status" value="1"/>
</dbReference>
<organism>
    <name type="scientific">Argemone mexicana</name>
    <name type="common">Mexican prickly poppy</name>
    <dbReference type="NCBI Taxonomy" id="54796"/>
    <lineage>
        <taxon>Eukaryota</taxon>
        <taxon>Viridiplantae</taxon>
        <taxon>Streptophyta</taxon>
        <taxon>Embryophyta</taxon>
        <taxon>Tracheophyta</taxon>
        <taxon>Spermatophyta</taxon>
        <taxon>Magnoliopsida</taxon>
        <taxon>Ranunculales</taxon>
        <taxon>Papaveraceae</taxon>
        <taxon>Papaveroideae</taxon>
        <taxon>Argemone</taxon>
    </lineage>
</organism>
<proteinExistence type="evidence at protein level"/>
<feature type="signal peptide" evidence="3">
    <location>
        <begin position="1"/>
        <end position="26"/>
    </location>
</feature>
<feature type="chain" id="PRO_5003264860" description="Tetrahydroberberine oxidase" evidence="3">
    <location>
        <begin position="27"/>
        <end position="543"/>
    </location>
</feature>
<feature type="domain" description="FAD-binding PCMH-type" evidence="5">
    <location>
        <begin position="75"/>
        <end position="250"/>
    </location>
</feature>
<feature type="glycosylation site" description="N-linked (GlcNAc...) asparagine" evidence="4">
    <location>
        <position position="54"/>
    </location>
</feature>
<feature type="glycosylation site" description="N-linked (GlcNAc...) asparagine" evidence="4">
    <location>
        <position position="74"/>
    </location>
</feature>
<feature type="glycosylation site" description="N-linked (GlcNAc...) asparagine" evidence="4">
    <location>
        <position position="135"/>
    </location>
</feature>
<feature type="glycosylation site" description="N-linked (GlcNAc...) asparagine" evidence="4">
    <location>
        <position position="142"/>
    </location>
</feature>
<feature type="glycosylation site" description="N-linked (GlcNAc...) asparagine" evidence="4">
    <location>
        <position position="162"/>
    </location>
</feature>
<feature type="glycosylation site" description="N-linked (GlcNAc...) asparagine" evidence="4">
    <location>
        <position position="295"/>
    </location>
</feature>
<feature type="glycosylation site" description="N-linked (GlcNAc...) asparagine" evidence="4">
    <location>
        <position position="335"/>
    </location>
</feature>
<feature type="glycosylation site" description="N-linked (GlcNAc...) asparagine" evidence="4">
    <location>
        <position position="440"/>
    </location>
</feature>
<feature type="glycosylation site" description="N-linked (GlcNAc...) asparagine" evidence="4">
    <location>
        <position position="482"/>
    </location>
</feature>
<feature type="disulfide bond" evidence="2">
    <location>
        <begin position="37"/>
        <end position="97"/>
    </location>
</feature>
<feature type="cross-link" description="6-(S-cysteinyl)-8alpha-(pros-histidyl)-FAD (His-Cys)" evidence="1">
    <location>
        <begin position="112"/>
        <end position="175"/>
    </location>
</feature>
<evidence type="ECO:0000250" key="1">
    <source>
        <dbReference type="UniProtKB" id="O64743"/>
    </source>
</evidence>
<evidence type="ECO:0000250" key="2">
    <source>
        <dbReference type="UniProtKB" id="P30986"/>
    </source>
</evidence>
<evidence type="ECO:0000255" key="3"/>
<evidence type="ECO:0000255" key="4">
    <source>
        <dbReference type="PROSITE-ProRule" id="PRU00498"/>
    </source>
</evidence>
<evidence type="ECO:0000255" key="5">
    <source>
        <dbReference type="PROSITE-ProRule" id="PRU00718"/>
    </source>
</evidence>
<evidence type="ECO:0000269" key="6">
    <source>
    </source>
</evidence>
<evidence type="ECO:0000303" key="7">
    <source>
    </source>
</evidence>
<evidence type="ECO:0000305" key="8"/>
<comment type="function">
    <text evidence="6">Catalyzes the oxidation of different tetrahydroprotoberberines, such as (S)-canadine, (S)-scoulerine and (S)-tetrahydropalmatine.</text>
</comment>
<comment type="catalytic activity">
    <reaction evidence="6">
        <text>(S)-canadine + 2 O2 + H(+) = berberine + 2 H2O2</text>
        <dbReference type="Rhea" id="RHEA:13489"/>
        <dbReference type="ChEBI" id="CHEBI:15378"/>
        <dbReference type="ChEBI" id="CHEBI:15379"/>
        <dbReference type="ChEBI" id="CHEBI:16118"/>
        <dbReference type="ChEBI" id="CHEBI:16240"/>
        <dbReference type="ChEBI" id="CHEBI:16592"/>
        <dbReference type="EC" id="1.3.3.8"/>
    </reaction>
    <physiologicalReaction direction="left-to-right" evidence="6">
        <dbReference type="Rhea" id="RHEA:13490"/>
    </physiologicalReaction>
</comment>
<comment type="cofactor">
    <cofactor evidence="6">
        <name>FAD</name>
        <dbReference type="ChEBI" id="CHEBI:57692"/>
    </cofactor>
    <text evidence="1">Binds 1 FAD per subunit in a bicovalent manner.</text>
</comment>
<comment type="PTM">
    <text evidence="1">The FAD cofactor is bound via a bicovalent 6-S-cysteinyl, 8alpha-N1-histidyl FAD linkage.</text>
</comment>
<comment type="similarity">
    <text evidence="8">Belongs to the oxygen-dependent FAD-linked oxidoreductase family.</text>
</comment>
<name>STOX_ARGME</name>
<keyword id="KW-1015">Disulfide bond</keyword>
<keyword id="KW-0274">FAD</keyword>
<keyword id="KW-0285">Flavoprotein</keyword>
<keyword id="KW-0325">Glycoprotein</keyword>
<keyword id="KW-0547">Nucleotide-binding</keyword>
<keyword id="KW-0560">Oxidoreductase</keyword>
<keyword id="KW-0732">Signal</keyword>
<keyword id="KW-0883">Thioether bond</keyword>
<reference key="1">
    <citation type="journal article" date="2011" name="Planta">
        <title>Heterologous expression of two FAD-dependent oxidases with (S)-tetrahydroprotoberberine oxidase activity from Argemone mexicana and Berberis wilsoniae in insect cells.</title>
        <authorList>
            <person name="Gesell A."/>
            <person name="Diaz Chavez M.L."/>
            <person name="Kramell R."/>
            <person name="Piotrowski M."/>
            <person name="Macheroux P."/>
            <person name="Kutchan T.M."/>
        </authorList>
    </citation>
    <scope>NUCLEOTIDE SEQUENCE [MRNA]</scope>
    <scope>FUNCTION</scope>
    <scope>CATALYTIC ACTIVITY</scope>
    <scope>COFACTOR</scope>
</reference>
<accession>F1BVB7</accession>
<sequence>MIPNSSSSSILSLLVLLLFSTSSSWATNSIHEDFLNCLSIYKSSFPIPIYTSKNSSFNTLFRSSARNLRFLSPNSTQKPEFIITPTLESHVQTTVVCSKKHGLDLKVRSGGHDVEGLSYVSDSPYVMIDLVDFRNITVNVKNATAWIQAGSSLGEVYYKVGNESKNTLGFPAGFCPTVGVGGHISGGGFGSLVRKYGLASDQVIDARIVTVNGEILNKETMGKDLYWAIRGGGANNFGVLLSWKVKLVPVTPIVTVATIDRTLEQGATNLVHKWQFVADRLHEDVYIGLTMVTANTSRAGEKTVVAQFSFLFLGNTDRLLQIMEESFPELGLKRNDTTEMSWVESHVYFYRRGQPIEFLWDRDHLTKSFLKVKSDYVREPISKLGLEGIWKRYVGGDSPAMLWTPFGGRMNQISEFESPYPHRAGNIYNIMYVGNWLNENESEKQLNWMRSFYSYMGRYVSKNPRSAYLNYKDLDLGVNDNNVSEYIRYLKARSWGRKYFKNNFEKLVKVKSMVDPDNFFKNKQSIPPIRSWGKELEAINIVI</sequence>
<protein>
    <recommendedName>
        <fullName evidence="8">Tetrahydroberberine oxidase</fullName>
        <shortName evidence="8">THB oxidase</shortName>
        <ecNumber evidence="6">1.3.3.8</ecNumber>
    </recommendedName>
    <alternativeName>
        <fullName evidence="7">(S)-tetrahydroprotoberberine oxidase</fullName>
        <shortName evidence="7">AmSTOX</shortName>
    </alternativeName>
</protein>